<proteinExistence type="evidence at protein level"/>
<sequence length="529" mass="60906">MALKWTSVLLLIHLGCYFSSGSCGKVLVWTGEYSHWMNMKTILKELVQRGHEVTVLASSASILFDPNDAFTLKLEVYPTSLTKTEFENIIMQQVKRWSDIQKDSFWLYFSQEQEILWEFHDIFRNFCKDVVSNKKVMKKLQESRFDIIFADAFFPCGELLAALLNIPFVYSLCFTPGYTIERHSGGLIFPPSYIPVVMSKLSDQMTFMERVKNMIYVLYFDFWFQMCDMKKWDQFYSEVLGRPTTLFETMGKADIWLMRNSWSFQFPHPFLPNIDFVGGLHCKPAKPLPKEMEEFVQSSGENGVVVFSLGSVISNMTAERANVIATALAKIPQKVLWRFDGNKPDALGLNTRLYKWIPQNDLLGLPKTRAFITHGGANGIYEAIYHGIPMVGIPLFWDQPDNIAHMKAKGAAVRLDFHTMSSTDLLNALKTVINDPSYKENVMKLSIIQHDQPVKPLHRAVFWIEFVMCHKGAKHLRVAARDLTWFQYHSLDVIGFLLACVATVIFVVTKFCLFCFWKFARKGKKGKRD</sequence>
<keyword id="KW-0025">Alternative splicing</keyword>
<keyword id="KW-0963">Cytoplasm</keyword>
<keyword id="KW-0256">Endoplasmic reticulum</keyword>
<keyword id="KW-0325">Glycoprotein</keyword>
<keyword id="KW-0328">Glycosyltransferase</keyword>
<keyword id="KW-0472">Membrane</keyword>
<keyword id="KW-1267">Proteomics identification</keyword>
<keyword id="KW-1185">Reference proteome</keyword>
<keyword id="KW-0732">Signal</keyword>
<keyword id="KW-0808">Transferase</keyword>
<keyword id="KW-0812">Transmembrane</keyword>
<keyword id="KW-1133">Transmembrane helix</keyword>
<evidence type="ECO:0000250" key="1">
    <source>
        <dbReference type="UniProtKB" id="Q8BWQ1"/>
    </source>
</evidence>
<evidence type="ECO:0000255" key="2"/>
<evidence type="ECO:0000269" key="3">
    <source>
    </source>
</evidence>
<evidence type="ECO:0000269" key="4">
    <source>
    </source>
</evidence>
<evidence type="ECO:0000303" key="5">
    <source>
    </source>
</evidence>
<evidence type="ECO:0000305" key="6"/>
<evidence type="ECO:0000305" key="7">
    <source>
    </source>
</evidence>
<evidence type="ECO:0000312" key="8">
    <source>
        <dbReference type="HGNC" id="HGNC:13479"/>
    </source>
</evidence>
<gene>
    <name evidence="8" type="primary">UGT2B28</name>
</gene>
<accession>Q9BY64</accession>
<accession>B5BUM0</accession>
<accession>Q9BY62</accession>
<accession>Q9BY63</accession>
<comment type="function">
    <molecule>Isoform 1</molecule>
    <text evidence="3">UDP-glucuronosyltransferase (UGT) that catalyzes phase II biotransformation reactions in which lipophilic substrates are conjugated with glucuronic acid to increase the metabolite's water solubility, thereby facilitating excretion into either the urine or bile (PubMed:11300766). Essential for the elimination and detoxification of drugs, xenobiotics and endogenous compounds (PubMed:11300766). Catalyzes the glucuronidation of endogenous steroid hormones such as androgens (androsterone, 3alpha-androstanediol) and estrogens (estradiol, estrone) (PubMed:11300766). Catalyzes the glucuronidation of bile acid substrates, which are natural detergents for dietary lipids absorption (PubMed:11300766). Displays glucuronidation activity toward the phenolic compounds eugenol (PubMed:11300766).</text>
</comment>
<comment type="function">
    <molecule>Isoform 2</molecule>
    <text evidence="3">Lack UDP-glucuronosyltransferase (UGT) activity.</text>
</comment>
<comment type="catalytic activity">
    <reaction evidence="3">
        <text>glucuronate acceptor + UDP-alpha-D-glucuronate = acceptor beta-D-glucuronoside + UDP + H(+)</text>
        <dbReference type="Rhea" id="RHEA:21032"/>
        <dbReference type="ChEBI" id="CHEBI:15378"/>
        <dbReference type="ChEBI" id="CHEBI:58052"/>
        <dbReference type="ChEBI" id="CHEBI:58223"/>
        <dbReference type="ChEBI" id="CHEBI:132367"/>
        <dbReference type="ChEBI" id="CHEBI:132368"/>
        <dbReference type="EC" id="2.4.1.17"/>
    </reaction>
    <physiologicalReaction direction="left-to-right" evidence="7">
        <dbReference type="Rhea" id="RHEA:21033"/>
    </physiologicalReaction>
</comment>
<comment type="subcellular location">
    <subcellularLocation>
        <location evidence="3">Endoplasmic reticulum membrane</location>
        <topology evidence="2">Single-pass membrane protein</topology>
    </subcellularLocation>
    <subcellularLocation>
        <location evidence="3">Cytoplasm</location>
        <location evidence="3">Perinuclear region</location>
    </subcellularLocation>
</comment>
<comment type="alternative products">
    <event type="alternative splicing"/>
    <isoform>
        <id>Q9BY64-1</id>
        <name>1</name>
        <name>I</name>
        <sequence type="displayed"/>
    </isoform>
    <isoform>
        <id>Q9BY64-2</id>
        <name>2</name>
        <name>II</name>
        <sequence type="described" ref="VSP_006710 VSP_006711"/>
    </isoform>
</comment>
<comment type="tissue specificity">
    <text evidence="3">Expressed in the liver, breast and kidney.</text>
</comment>
<comment type="similarity">
    <text evidence="6">Belongs to the UDP-glycosyltransferase family.</text>
</comment>
<comment type="sequence caution" evidence="6">
    <conflict type="miscellaneous discrepancy">
        <sequence resource="EMBL-CDS" id="AAK31809"/>
    </conflict>
    <text>Aberrant splicing.</text>
</comment>
<feature type="signal peptide" evidence="2">
    <location>
        <begin position="1"/>
        <end position="24"/>
    </location>
</feature>
<feature type="chain" id="PRO_0000036046" description="UDP-glucuronosyltransferase 2B28">
    <location>
        <begin position="25"/>
        <end position="529"/>
    </location>
</feature>
<feature type="transmembrane region" description="Helical" evidence="2">
    <location>
        <begin position="495"/>
        <end position="517"/>
    </location>
</feature>
<feature type="modified residue" description="N6-succinyllysine" evidence="1">
    <location>
        <position position="135"/>
    </location>
</feature>
<feature type="glycosylation site" description="N-linked (GlcNAc...) asparagine" evidence="2">
    <location>
        <position position="315"/>
    </location>
</feature>
<feature type="splice variant" id="VSP_006710" description="In isoform 2." evidence="5">
    <original>V</original>
    <variation>I</variation>
    <location>
        <position position="335"/>
    </location>
</feature>
<feature type="splice variant" id="VSP_006711" description="In isoform 2." evidence="5">
    <location>
        <begin position="336"/>
        <end position="529"/>
    </location>
</feature>
<feature type="sequence variant" id="VAR_059847" description="In dbSNP:rs4235127." evidence="4">
    <original>L</original>
    <variation>H</variation>
    <location>
        <position position="365"/>
    </location>
</feature>
<feature type="sequence variant" id="VAR_060661" description="In dbSNP:rs6843900." evidence="4">
    <original>I</original>
    <variation>R</variation>
    <location>
        <position position="447"/>
    </location>
</feature>
<feature type="sequence variant" id="VAR_060662" description="In dbSNP:rs6828191." evidence="4">
    <original>H</original>
    <variation>D</variation>
    <location>
        <position position="458"/>
    </location>
</feature>
<feature type="sequence conflict" description="In Ref. 2; BAG70270." evidence="6" ref="2">
    <original>C</original>
    <variation>R</variation>
    <location>
        <position position="173"/>
    </location>
</feature>
<reference key="1">
    <citation type="journal article" date="2001" name="Biochemistry">
        <title>Isolation and characterization of the UGT2B28 cDNA encoding a novel human steroid conjugating UDP-glucuronosyltransferase.</title>
        <authorList>
            <person name="Levesque E."/>
            <person name="Turgeon D."/>
            <person name="Carrier J.-S."/>
            <person name="Montminy V."/>
            <person name="Beaulieu M."/>
            <person name="Belanger A."/>
        </authorList>
    </citation>
    <scope>NUCLEOTIDE SEQUENCE [MRNA] (ISOFORMS 1 AND 2)</scope>
    <scope>FUNCTION (ISOFORMS 1 AND 2)</scope>
    <scope>CATALYTIC ACTIVITY</scope>
    <scope>SUBCELLULAR LOCATION</scope>
    <scope>TISSUE SPECIFICITY</scope>
</reference>
<reference key="2">
    <citation type="journal article" date="2008" name="Nat. Methods">
        <title>Human protein factory for converting the transcriptome into an in vitro-expressed proteome.</title>
        <authorList>
            <person name="Goshima N."/>
            <person name="Kawamura Y."/>
            <person name="Fukumoto A."/>
            <person name="Miura A."/>
            <person name="Honma R."/>
            <person name="Satoh R."/>
            <person name="Wakamatsu A."/>
            <person name="Yamamoto J."/>
            <person name="Kimura K."/>
            <person name="Nishikawa T."/>
            <person name="Andoh T."/>
            <person name="Iida Y."/>
            <person name="Ishikawa K."/>
            <person name="Ito E."/>
            <person name="Kagawa N."/>
            <person name="Kaminaga C."/>
            <person name="Kanehori K."/>
            <person name="Kawakami B."/>
            <person name="Kenmochi K."/>
            <person name="Kimura R."/>
            <person name="Kobayashi M."/>
            <person name="Kuroita T."/>
            <person name="Kuwayama H."/>
            <person name="Maruyama Y."/>
            <person name="Matsuo K."/>
            <person name="Minami K."/>
            <person name="Mitsubori M."/>
            <person name="Mori M."/>
            <person name="Morishita R."/>
            <person name="Murase A."/>
            <person name="Nishikawa A."/>
            <person name="Nishikawa S."/>
            <person name="Okamoto T."/>
            <person name="Sakagami N."/>
            <person name="Sakamoto Y."/>
            <person name="Sasaki Y."/>
            <person name="Seki T."/>
            <person name="Sono S."/>
            <person name="Sugiyama A."/>
            <person name="Sumiya T."/>
            <person name="Takayama T."/>
            <person name="Takayama Y."/>
            <person name="Takeda H."/>
            <person name="Togashi T."/>
            <person name="Yahata K."/>
            <person name="Yamada H."/>
            <person name="Yanagisawa Y."/>
            <person name="Endo Y."/>
            <person name="Imamoto F."/>
            <person name="Kisu Y."/>
            <person name="Tanaka S."/>
            <person name="Isogai T."/>
            <person name="Imai J."/>
            <person name="Watanabe S."/>
            <person name="Nomura N."/>
        </authorList>
    </citation>
    <scope>NUCLEOTIDE SEQUENCE [LARGE SCALE MRNA] (ISOFORM 1)</scope>
    <scope>VARIANTS HIS-365; ARG-447 AND ASP-458</scope>
</reference>
<protein>
    <recommendedName>
        <fullName evidence="7">UDP-glucuronosyltransferase 2B28</fullName>
        <shortName>UDPGT 2B28</shortName>
        <shortName>UGT2B28</shortName>
        <ecNumber evidence="3">2.4.1.17</ecNumber>
    </recommendedName>
</protein>
<dbReference type="EC" id="2.4.1.17" evidence="3"/>
<dbReference type="EMBL" id="AF177272">
    <property type="protein sequence ID" value="AAK31807.1"/>
    <property type="molecule type" value="mRNA"/>
</dbReference>
<dbReference type="EMBL" id="AF177273">
    <property type="protein sequence ID" value="AAK31808.1"/>
    <property type="molecule type" value="mRNA"/>
</dbReference>
<dbReference type="EMBL" id="AF177274">
    <property type="protein sequence ID" value="AAK31809.1"/>
    <property type="status" value="ALT_SEQ"/>
    <property type="molecule type" value="mRNA"/>
</dbReference>
<dbReference type="EMBL" id="AB451456">
    <property type="protein sequence ID" value="BAG70270.1"/>
    <property type="molecule type" value="mRNA"/>
</dbReference>
<dbReference type="CCDS" id="CCDS3528.1">
    <molecule id="Q9BY64-1"/>
</dbReference>
<dbReference type="CCDS" id="CCDS56330.1">
    <molecule id="Q9BY64-2"/>
</dbReference>
<dbReference type="RefSeq" id="NP_001193933.1">
    <molecule id="Q9BY64-2"/>
    <property type="nucleotide sequence ID" value="NM_001207004.2"/>
</dbReference>
<dbReference type="RefSeq" id="NP_444267.1">
    <molecule id="Q9BY64-1"/>
    <property type="nucleotide sequence ID" value="NM_053039.2"/>
</dbReference>
<dbReference type="SMR" id="Q9BY64"/>
<dbReference type="BioGRID" id="119987">
    <property type="interactions" value="104"/>
</dbReference>
<dbReference type="FunCoup" id="Q9BY64">
    <property type="interactions" value="326"/>
</dbReference>
<dbReference type="IntAct" id="Q9BY64">
    <property type="interactions" value="4"/>
</dbReference>
<dbReference type="STRING" id="9606.ENSP00000334276"/>
<dbReference type="ChEMBL" id="CHEMBL6189"/>
<dbReference type="CAZy" id="GT1">
    <property type="family name" value="Glycosyltransferase Family 1"/>
</dbReference>
<dbReference type="GlyCosmos" id="Q9BY64">
    <property type="glycosylation" value="1 site, No reported glycans"/>
</dbReference>
<dbReference type="GlyGen" id="Q9BY64">
    <property type="glycosylation" value="1 site"/>
</dbReference>
<dbReference type="iPTMnet" id="Q9BY64"/>
<dbReference type="PhosphoSitePlus" id="Q9BY64"/>
<dbReference type="BioMuta" id="UGT2B28"/>
<dbReference type="DMDM" id="20140759"/>
<dbReference type="jPOST" id="Q9BY64"/>
<dbReference type="MassIVE" id="Q9BY64"/>
<dbReference type="PaxDb" id="9606-ENSP00000334276"/>
<dbReference type="PeptideAtlas" id="Q9BY64"/>
<dbReference type="ProteomicsDB" id="79588">
    <molecule id="Q9BY64-1"/>
</dbReference>
<dbReference type="ProteomicsDB" id="79589">
    <molecule id="Q9BY64-2"/>
</dbReference>
<dbReference type="Antibodypedia" id="66995">
    <property type="antibodies" value="47 antibodies from 12 providers"/>
</dbReference>
<dbReference type="DNASU" id="54490"/>
<dbReference type="Ensembl" id="ENST00000335568.10">
    <molecule id="Q9BY64-1"/>
    <property type="protein sequence ID" value="ENSP00000334276.5"/>
    <property type="gene ID" value="ENSG00000135226.18"/>
</dbReference>
<dbReference type="Ensembl" id="ENST00000511240.1">
    <molecule id="Q9BY64-2"/>
    <property type="protein sequence ID" value="ENSP00000427399.1"/>
    <property type="gene ID" value="ENSG00000135226.18"/>
</dbReference>
<dbReference type="GeneID" id="54490"/>
<dbReference type="KEGG" id="hsa:54490"/>
<dbReference type="MANE-Select" id="ENST00000335568.10">
    <property type="protein sequence ID" value="ENSP00000334276.5"/>
    <property type="RefSeq nucleotide sequence ID" value="NM_053039.2"/>
    <property type="RefSeq protein sequence ID" value="NP_444267.1"/>
</dbReference>
<dbReference type="UCSC" id="uc003hej.3">
    <molecule id="Q9BY64-1"/>
    <property type="organism name" value="human"/>
</dbReference>
<dbReference type="AGR" id="HGNC:13479"/>
<dbReference type="CTD" id="54490"/>
<dbReference type="DisGeNET" id="54490"/>
<dbReference type="GeneCards" id="UGT2B28"/>
<dbReference type="HGNC" id="HGNC:13479">
    <property type="gene designation" value="UGT2B28"/>
</dbReference>
<dbReference type="HPA" id="ENSG00000135226">
    <property type="expression patterns" value="Tissue enriched (breast)"/>
</dbReference>
<dbReference type="MIM" id="606497">
    <property type="type" value="gene"/>
</dbReference>
<dbReference type="neXtProt" id="NX_Q9BY64"/>
<dbReference type="OpenTargets" id="ENSG00000135226"/>
<dbReference type="PharmGKB" id="PA37779"/>
<dbReference type="VEuPathDB" id="HostDB:ENSG00000135226"/>
<dbReference type="eggNOG" id="KOG1192">
    <property type="taxonomic scope" value="Eukaryota"/>
</dbReference>
<dbReference type="GeneTree" id="ENSGT00940000165281"/>
<dbReference type="HOGENOM" id="CLU_012949_3_0_1"/>
<dbReference type="InParanoid" id="Q9BY64"/>
<dbReference type="OMA" id="RAQSFRM"/>
<dbReference type="OrthoDB" id="9473804at2759"/>
<dbReference type="PAN-GO" id="Q9BY64">
    <property type="GO annotations" value="3 GO annotations based on evolutionary models"/>
</dbReference>
<dbReference type="PhylomeDB" id="Q9BY64"/>
<dbReference type="TreeFam" id="TF315472"/>
<dbReference type="BRENDA" id="2.4.1.17">
    <property type="organism ID" value="2681"/>
</dbReference>
<dbReference type="PathwayCommons" id="Q9BY64"/>
<dbReference type="Reactome" id="R-HSA-156588">
    <property type="pathway name" value="Glucuronidation"/>
</dbReference>
<dbReference type="Reactome" id="R-HSA-9749641">
    <property type="pathway name" value="Aspirin ADME"/>
</dbReference>
<dbReference type="BioGRID-ORCS" id="54490">
    <property type="hits" value="11 hits in 1047 CRISPR screens"/>
</dbReference>
<dbReference type="GenomeRNAi" id="54490"/>
<dbReference type="Pharos" id="Q9BY64">
    <property type="development level" value="Tbio"/>
</dbReference>
<dbReference type="PRO" id="PR:Q9BY64"/>
<dbReference type="Proteomes" id="UP000005640">
    <property type="component" value="Chromosome 4"/>
</dbReference>
<dbReference type="RNAct" id="Q9BY64">
    <property type="molecule type" value="protein"/>
</dbReference>
<dbReference type="Bgee" id="ENSG00000135226">
    <property type="expression patterns" value="Expressed in gall bladder and 20 other cell types or tissues"/>
</dbReference>
<dbReference type="GO" id="GO:0005783">
    <property type="term" value="C:endoplasmic reticulum"/>
    <property type="evidence" value="ECO:0000314"/>
    <property type="project" value="UniProtKB"/>
</dbReference>
<dbReference type="GO" id="GO:0005789">
    <property type="term" value="C:endoplasmic reticulum membrane"/>
    <property type="evidence" value="ECO:0007669"/>
    <property type="project" value="UniProtKB-SubCell"/>
</dbReference>
<dbReference type="GO" id="GO:0005640">
    <property type="term" value="C:nuclear outer membrane"/>
    <property type="evidence" value="ECO:0000314"/>
    <property type="project" value="UniProtKB"/>
</dbReference>
<dbReference type="GO" id="GO:0048471">
    <property type="term" value="C:perinuclear region of cytoplasm"/>
    <property type="evidence" value="ECO:0007669"/>
    <property type="project" value="UniProtKB-SubCell"/>
</dbReference>
<dbReference type="GO" id="GO:0015020">
    <property type="term" value="F:glucuronosyltransferase activity"/>
    <property type="evidence" value="ECO:0000314"/>
    <property type="project" value="UniProtKB"/>
</dbReference>
<dbReference type="GO" id="GO:0008210">
    <property type="term" value="P:estrogen metabolic process"/>
    <property type="evidence" value="ECO:0000318"/>
    <property type="project" value="GO_Central"/>
</dbReference>
<dbReference type="GO" id="GO:0008202">
    <property type="term" value="P:steroid metabolic process"/>
    <property type="evidence" value="ECO:0000314"/>
    <property type="project" value="UniProtKB"/>
</dbReference>
<dbReference type="CDD" id="cd03784">
    <property type="entry name" value="GT1_Gtf-like"/>
    <property type="match status" value="1"/>
</dbReference>
<dbReference type="FunFam" id="3.40.50.2000:FF:000001">
    <property type="entry name" value="UDP-glucuronosyltransferase"/>
    <property type="match status" value="1"/>
</dbReference>
<dbReference type="FunFam" id="3.40.50.2000:FF:000081">
    <property type="entry name" value="UDP-glucuronosyltransferase 2A2"/>
    <property type="match status" value="1"/>
</dbReference>
<dbReference type="Gene3D" id="3.40.50.2000">
    <property type="entry name" value="Glycogen Phosphorylase B"/>
    <property type="match status" value="2"/>
</dbReference>
<dbReference type="InterPro" id="IPR050271">
    <property type="entry name" value="UDP-glycosyltransferase"/>
</dbReference>
<dbReference type="InterPro" id="IPR002213">
    <property type="entry name" value="UDP_glucos_trans"/>
</dbReference>
<dbReference type="InterPro" id="IPR035595">
    <property type="entry name" value="UDP_glycos_trans_CS"/>
</dbReference>
<dbReference type="PANTHER" id="PTHR48043">
    <property type="entry name" value="EG:EG0003.4 PROTEIN-RELATED"/>
    <property type="match status" value="1"/>
</dbReference>
<dbReference type="PANTHER" id="PTHR48043:SF86">
    <property type="entry name" value="UDP-GLUCURONOSYLTRANSFERASE 2B10-RELATED"/>
    <property type="match status" value="1"/>
</dbReference>
<dbReference type="Pfam" id="PF00201">
    <property type="entry name" value="UDPGT"/>
    <property type="match status" value="1"/>
</dbReference>
<dbReference type="SUPFAM" id="SSF53756">
    <property type="entry name" value="UDP-Glycosyltransferase/glycogen phosphorylase"/>
    <property type="match status" value="1"/>
</dbReference>
<dbReference type="PROSITE" id="PS00375">
    <property type="entry name" value="UDPGT"/>
    <property type="match status" value="1"/>
</dbReference>
<organism>
    <name type="scientific">Homo sapiens</name>
    <name type="common">Human</name>
    <dbReference type="NCBI Taxonomy" id="9606"/>
    <lineage>
        <taxon>Eukaryota</taxon>
        <taxon>Metazoa</taxon>
        <taxon>Chordata</taxon>
        <taxon>Craniata</taxon>
        <taxon>Vertebrata</taxon>
        <taxon>Euteleostomi</taxon>
        <taxon>Mammalia</taxon>
        <taxon>Eutheria</taxon>
        <taxon>Euarchontoglires</taxon>
        <taxon>Primates</taxon>
        <taxon>Haplorrhini</taxon>
        <taxon>Catarrhini</taxon>
        <taxon>Hominidae</taxon>
        <taxon>Homo</taxon>
    </lineage>
</organism>
<name>UDB28_HUMAN</name>